<keyword id="KW-1015">Disulfide bond</keyword>
<keyword id="KW-0872">Ion channel impairing toxin</keyword>
<keyword id="KW-0166">Nematocyst</keyword>
<keyword id="KW-0646">Protease inhibitor</keyword>
<keyword id="KW-0964">Secreted</keyword>
<keyword id="KW-0722">Serine protease inhibitor</keyword>
<keyword id="KW-0800">Toxin</keyword>
<accession>P0DV05</accession>
<sequence length="56" mass="6086">GSICLEPKVVGPCKARIRRFYFDSETGKCTPFIYGGCGGNGNNFETLHACRAICRA</sequence>
<dbReference type="SMR" id="P0DV05"/>
<dbReference type="GO" id="GO:0005615">
    <property type="term" value="C:extracellular space"/>
    <property type="evidence" value="ECO:0007669"/>
    <property type="project" value="TreeGrafter"/>
</dbReference>
<dbReference type="GO" id="GO:0042151">
    <property type="term" value="C:nematocyst"/>
    <property type="evidence" value="ECO:0007669"/>
    <property type="project" value="UniProtKB-SubCell"/>
</dbReference>
<dbReference type="GO" id="GO:0099106">
    <property type="term" value="F:ion channel regulator activity"/>
    <property type="evidence" value="ECO:0007669"/>
    <property type="project" value="UniProtKB-KW"/>
</dbReference>
<dbReference type="GO" id="GO:0004867">
    <property type="term" value="F:serine-type endopeptidase inhibitor activity"/>
    <property type="evidence" value="ECO:0007669"/>
    <property type="project" value="UniProtKB-KW"/>
</dbReference>
<dbReference type="GO" id="GO:0090729">
    <property type="term" value="F:toxin activity"/>
    <property type="evidence" value="ECO:0007669"/>
    <property type="project" value="UniProtKB-KW"/>
</dbReference>
<dbReference type="CDD" id="cd22618">
    <property type="entry name" value="Kunitz_SHPI"/>
    <property type="match status" value="1"/>
</dbReference>
<dbReference type="FunFam" id="4.10.410.10:FF:000021">
    <property type="entry name" value="Serine protease inhibitor, putative"/>
    <property type="match status" value="1"/>
</dbReference>
<dbReference type="Gene3D" id="4.10.410.10">
    <property type="entry name" value="Pancreatic trypsin inhibitor Kunitz domain"/>
    <property type="match status" value="1"/>
</dbReference>
<dbReference type="InterPro" id="IPR002223">
    <property type="entry name" value="Kunitz_BPTI"/>
</dbReference>
<dbReference type="InterPro" id="IPR036880">
    <property type="entry name" value="Kunitz_BPTI_sf"/>
</dbReference>
<dbReference type="InterPro" id="IPR020901">
    <property type="entry name" value="Prtase_inh_Kunz-CS"/>
</dbReference>
<dbReference type="InterPro" id="IPR050098">
    <property type="entry name" value="TFPI/VKTCI-like"/>
</dbReference>
<dbReference type="PANTHER" id="PTHR10083:SF374">
    <property type="entry name" value="BPTI_KUNITZ INHIBITOR DOMAIN-CONTAINING PROTEIN"/>
    <property type="match status" value="1"/>
</dbReference>
<dbReference type="PANTHER" id="PTHR10083">
    <property type="entry name" value="KUNITZ-TYPE PROTEASE INHIBITOR-RELATED"/>
    <property type="match status" value="1"/>
</dbReference>
<dbReference type="Pfam" id="PF00014">
    <property type="entry name" value="Kunitz_BPTI"/>
    <property type="match status" value="1"/>
</dbReference>
<dbReference type="PRINTS" id="PR00759">
    <property type="entry name" value="BASICPTASE"/>
</dbReference>
<dbReference type="SMART" id="SM00131">
    <property type="entry name" value="KU"/>
    <property type="match status" value="1"/>
</dbReference>
<dbReference type="SUPFAM" id="SSF57362">
    <property type="entry name" value="BPTI-like"/>
    <property type="match status" value="1"/>
</dbReference>
<dbReference type="PROSITE" id="PS00280">
    <property type="entry name" value="BPTI_KUNITZ_1"/>
    <property type="match status" value="1"/>
</dbReference>
<dbReference type="PROSITE" id="PS50279">
    <property type="entry name" value="BPTI_KUNITZ_2"/>
    <property type="match status" value="1"/>
</dbReference>
<comment type="function">
    <text evidence="4 5 6">This recombinant serine protease inhibitor inhibits both trypsin (Ki=21 nM) and chymotrypsin (Ki=500 nM) (Ref.3). It possesses anti-inflammatory activity in vitro (Ref.3). It inhibits macrophage LPS-induced nitric oxide synthesis, and blocks histamine influence on intracellular calcium concentration in murine bone marrow-derived macrophages, which can indicate inhibition of H1-histamine receptor (HRH1) (Ref.3). In vitro, it shows cytoprotective activity in the oxidative stress agent 6-hydroxydopamine (6-OHDA)-induced neurotoxicity model (PubMed:33802055). In this model, it decreases reactive oxygen species (ROS) levels, and increases cell viability in a correlated manner (PubMed:33802055). It is possible that the observed effect is due to the ability of this peptides to act as free-radical scavenger (PubMed:33802055). In vivo, it shows analgesic activity, since it increases hot plate and tail flick withdrawal latencies, when using a mice thermal pain stimulation model (PubMed:25937220).</text>
</comment>
<comment type="subcellular location">
    <subcellularLocation>
        <location evidence="9">Secreted</location>
    </subcellularLocation>
    <subcellularLocation>
        <location evidence="9">Nematocyst</location>
    </subcellularLocation>
</comment>
<comment type="miscellaneous">
    <text evidence="5">Negative results: has no activity on Kv1.1/KCNA1, Kv1.2/KCNA2, Kv1.3/KCNA3, Kv1.4/KCNA4, Kv1.5/KCNA5, Kv1.6/KCNA6, Shaker, Kv11.1/KCNH2/ERG1 potassium channels and on TRPV1, the capsaicin receptors.</text>
</comment>
<comment type="miscellaneous">
    <text evidence="9">A synonymy between H.magnifica and R.crispa is controversial.</text>
</comment>
<comment type="similarity">
    <text evidence="9">Belongs to the venom Kunitz-type family. Sea anemone type 2 potassium channel toxin subfamily.</text>
</comment>
<reference key="1">
    <citation type="journal article" date="2012" name="Peptides">
        <title>A new multigene superfamily of Kunitz-type protease inhibitors from sea anemone Heteractis crispa.</title>
        <authorList>
            <person name="Isaeva M.P."/>
            <person name="Chausova V.E."/>
            <person name="Zelepuga E.A."/>
            <person name="Guzev K.V."/>
            <person name="Tabakmakher V.M."/>
            <person name="Monastyrnaya M.M."/>
            <person name="Kozlovskaya E.P."/>
        </authorList>
    </citation>
    <scope>NUCLEOTIDE SEQUENCE [MRNA]</scope>
    <scope>3D-STRUCTURE MODELING</scope>
</reference>
<reference key="2">
    <citation type="journal article" date="2015" name="Dokl. Biochem. Biophys.">
        <title>Analgesic effect of novel Kunitz-type polypeptides of the sea anemone Heteractis crispa.</title>
        <authorList>
            <person name="Tabakmakher V.M."/>
            <person name="Sintsova O.V."/>
            <person name="Krivoshapko O.N."/>
            <person name="Zelepuga E.A."/>
            <person name="Monastyrnaya M.M."/>
            <person name="Kozlovskaya E.P."/>
        </authorList>
    </citation>
    <scope>FUNCTION</scope>
</reference>
<reference key="3">
    <citation type="journal article" date="2015" name="Russ. J. Bioorg. Chem.">
        <title>Anti-inflammatory activity of a polypeptide from the Heteractis crispa sea anemone.</title>
        <authorList>
            <person name="Sintsova O.V."/>
            <person name="Monastyrnaya M.M."/>
            <person name="Pislyagin E.A."/>
            <person name="Menchinskaya E.S."/>
            <person name="Leychenko E.V."/>
            <person name="Aminin D.L."/>
            <person name="Kozlovskaya E.P."/>
        </authorList>
    </citation>
    <scope>FUNCTION</scope>
    <scope>RECOMBINANT EXPRESSION</scope>
</reference>
<reference key="4">
    <citation type="journal article" date="2021" name="Biomedicines">
        <title>Sea anemone kunitz-type peptides demonstrate neuroprotective activity in the 6-hydroxydopamine induced neurotoxicity model.</title>
        <authorList>
            <person name="Sintsova O."/>
            <person name="Gladkikh I."/>
            <person name="Monastyrnaya M."/>
            <person name="Tabakmakher V."/>
            <person name="Yurchenko E."/>
            <person name="Menchinskaya E."/>
            <person name="Pislyagin E."/>
            <person name="Andreev Y."/>
            <person name="Kozlov S."/>
            <person name="Peigneur S."/>
            <person name="Tytgat J."/>
            <person name="Aminin D."/>
            <person name="Kozlovskaya E."/>
            <person name="Leychenko E."/>
        </authorList>
    </citation>
    <scope>FUNCTION</scope>
    <scope>RECOMBINANT EXPRESSION</scope>
</reference>
<proteinExistence type="inferred from homology"/>
<organism>
    <name type="scientific">Radianthus crispa</name>
    <name type="common">Leathery sea anemone</name>
    <name type="synonym">Heteractis crispa</name>
    <dbReference type="NCBI Taxonomy" id="3122430"/>
    <lineage>
        <taxon>Eukaryota</taxon>
        <taxon>Metazoa</taxon>
        <taxon>Cnidaria</taxon>
        <taxon>Anthozoa</taxon>
        <taxon>Hexacorallia</taxon>
        <taxon>Actiniaria</taxon>
        <taxon>Stichodactylidae</taxon>
        <taxon>Radianthus</taxon>
    </lineage>
</organism>
<evidence type="ECO:0000250" key="1">
    <source>
        <dbReference type="UniProtKB" id="P00974"/>
    </source>
</evidence>
<evidence type="ECO:0000250" key="2">
    <source>
        <dbReference type="UniProtKB" id="P31713"/>
    </source>
</evidence>
<evidence type="ECO:0000255" key="3">
    <source>
        <dbReference type="PROSITE-ProRule" id="PRU00031"/>
    </source>
</evidence>
<evidence type="ECO:0000269" key="4">
    <source>
    </source>
</evidence>
<evidence type="ECO:0000269" key="5">
    <source>
    </source>
</evidence>
<evidence type="ECO:0000269" key="6">
    <source ref="3"/>
</evidence>
<evidence type="ECO:0000303" key="7">
    <source>
    </source>
</evidence>
<evidence type="ECO:0000303" key="8">
    <source ref="3"/>
</evidence>
<evidence type="ECO:0000305" key="9"/>
<evidence type="ECO:0000305" key="10">
    <source ref="3"/>
</evidence>
<feature type="chain" id="PRO_0000454106" description="PI-stichotoxin-Hcr2o" evidence="10">
    <location>
        <begin position="1"/>
        <end position="56"/>
    </location>
</feature>
<feature type="domain" description="BPTI/Kunitz inhibitor" evidence="3">
    <location>
        <begin position="4"/>
        <end position="54"/>
    </location>
</feature>
<feature type="site" description="Reactive bond for trypsin" evidence="1">
    <location>
        <begin position="14"/>
        <end position="15"/>
    </location>
</feature>
<feature type="disulfide bond" evidence="2">
    <location>
        <begin position="4"/>
        <end position="54"/>
    </location>
</feature>
<feature type="disulfide bond" evidence="2">
    <location>
        <begin position="13"/>
        <end position="37"/>
    </location>
</feature>
<feature type="disulfide bond" evidence="2">
    <location>
        <begin position="29"/>
        <end position="50"/>
    </location>
</feature>
<protein>
    <recommendedName>
        <fullName evidence="9">PI-stichotoxin-Hcr2o</fullName>
        <shortName evidence="9">PI-SHTX-Hcr2o</shortName>
    </recommendedName>
    <alternativeName>
        <fullName evidence="7">GS-polypeptide 1</fullName>
        <shortName evidence="7">GSP1</shortName>
    </alternativeName>
    <alternativeName>
        <fullName evidence="8">Kunitz-type serine protease inhibitor HCGS1.20</fullName>
    </alternativeName>
</protein>
<name>VKT2O_RADCR</name>